<sequence>MAVHVDNVKDLAKTNEGVSVILNRYTDWKCKSGVTEAPLLPSNLGTRITDYAKTTLKGDSVALNFSDLVLSLGATVSVGTPGSVLVELINPNMDGPFQLVQGQSLSWSPGSGRPCLMIFSIHHQLTADAEPFRIRISNNGIPTKKTFARCHAYWGFDLSPRMRYYKNEPAKRIDLDVGFYKTHLSNMKQVRDYVQYTFDNSRMDGNPQLVAKSTMNVVPRIADVPKYVGIAPPSRSGNHQEATPDDWLKQYVDKDSETNKLSDVESSSDSSSLLSMRARSRRYTKNYKIPIKRHPQATGEVGTT</sequence>
<accession>Q66095</accession>
<keyword id="KW-0945">Host-virus interaction</keyword>
<keyword id="KW-1090">Inhibition of host innate immune response by virus</keyword>
<keyword id="KW-1185">Reference proteome</keyword>
<keyword id="KW-0941">Suppressor of RNA silencing</keyword>
<keyword id="KW-0813">Transport</keyword>
<keyword id="KW-0899">Viral immunoevasion</keyword>
<keyword id="KW-0916">Viral movement protein</keyword>
<name>MP_CRSVL</name>
<comment type="function">
    <text evidence="1">Cell-to-cell movement and long-distance transport of the viral infection. Also acts as a suppressor of RNA-mediated gene silencing, also known as post-transcriptional gene silencing (PTGS), a mechanism of plant viral defense that limits the accumulation of viral RNAs (By similarity).</text>
</comment>
<feature type="chain" id="PRO_0000398310" description="Movement protein">
    <location>
        <begin position="1"/>
        <end position="304"/>
    </location>
</feature>
<feature type="region of interest" description="Disordered" evidence="2">
    <location>
        <begin position="257"/>
        <end position="304"/>
    </location>
</feature>
<feature type="compositionally biased region" description="Low complexity" evidence="2">
    <location>
        <begin position="264"/>
        <end position="277"/>
    </location>
</feature>
<feature type="compositionally biased region" description="Basic residues" evidence="2">
    <location>
        <begin position="278"/>
        <end position="295"/>
    </location>
</feature>
<dbReference type="EMBL" id="M88589">
    <property type="protein sequence ID" value="AAA42901.1"/>
    <property type="molecule type" value="Genomic_RNA"/>
</dbReference>
<dbReference type="PIR" id="JQ1642">
    <property type="entry name" value="JQ1642"/>
</dbReference>
<dbReference type="KEGG" id="vg:956638"/>
<dbReference type="Proteomes" id="UP000000574">
    <property type="component" value="Genome"/>
</dbReference>
<dbReference type="GO" id="GO:0052170">
    <property type="term" value="P:symbiont-mediated suppression of host innate immune response"/>
    <property type="evidence" value="ECO:0007669"/>
    <property type="project" value="UniProtKB-KW"/>
</dbReference>
<dbReference type="GO" id="GO:0046740">
    <property type="term" value="P:transport of virus in host, cell to cell"/>
    <property type="evidence" value="ECO:0007669"/>
    <property type="project" value="UniProtKB-KW"/>
</dbReference>
<dbReference type="InterPro" id="IPR000603">
    <property type="entry name" value="MPV"/>
</dbReference>
<dbReference type="Pfam" id="PF00803">
    <property type="entry name" value="3A"/>
    <property type="match status" value="1"/>
</dbReference>
<organism>
    <name type="scientific">Carnation ringspot virus (isolate Lommel)</name>
    <name type="common">CRSV</name>
    <dbReference type="NCBI Taxonomy" id="652597"/>
    <lineage>
        <taxon>Viruses</taxon>
        <taxon>Riboviria</taxon>
        <taxon>Orthornavirae</taxon>
        <taxon>Kitrinoviricota</taxon>
        <taxon>Tolucaviricetes</taxon>
        <taxon>Tolivirales</taxon>
        <taxon>Tombusviridae</taxon>
        <taxon>Regressovirinae</taxon>
        <taxon>Dianthovirus</taxon>
        <taxon>Dianthovirus dianthi</taxon>
    </lineage>
</organism>
<protein>
    <recommendedName>
        <fullName>Movement protein</fullName>
        <shortName>MP</shortName>
    </recommendedName>
</protein>
<evidence type="ECO:0000250" key="1"/>
<evidence type="ECO:0000256" key="2">
    <source>
        <dbReference type="SAM" id="MobiDB-lite"/>
    </source>
</evidence>
<reference key="1">
    <citation type="journal article" date="1992" name="J. Gen. Virol.">
        <title>Nucleotide sequence of carnation ringspot dianthovirus RNA-2.</title>
        <authorList>
            <person name="Kendall T.L."/>
            <person name="Lommel S.A."/>
        </authorList>
    </citation>
    <scope>NUCLEOTIDE SEQUENCE [GENOMIC RNA]</scope>
</reference>
<reference key="2">
    <citation type="submission" date="1999-03" db="EMBL/GenBank/DDBJ databases">
        <authorList>
            <person name="Sit T.L."/>
            <person name="Lommel S.A."/>
        </authorList>
    </citation>
    <scope>NUCLEOTIDE SEQUENCE [GENOMIC RNA]</scope>
</reference>
<proteinExistence type="inferred from homology"/>
<gene>
    <name type="ORF">ORF3</name>
</gene>
<organismHost>
    <name type="scientific">Dianthus barbatus</name>
    <dbReference type="NCBI Taxonomy" id="278075"/>
</organismHost>
<organismHost>
    <name type="scientific">Dianthus caryophyllus</name>
    <name type="common">Carnation</name>
    <name type="synonym">Clove pink</name>
    <dbReference type="NCBI Taxonomy" id="3570"/>
</organismHost>